<proteinExistence type="inferred from homology"/>
<reference key="1">
    <citation type="journal article" date="2007" name="J. Bacteriol.">
        <title>The genome sequence of avian pathogenic Escherichia coli strain O1:K1:H7 shares strong similarities with human extraintestinal pathogenic E. coli genomes.</title>
        <authorList>
            <person name="Johnson T.J."/>
            <person name="Kariyawasam S."/>
            <person name="Wannemuehler Y."/>
            <person name="Mangiamele P."/>
            <person name="Johnson S.J."/>
            <person name="Doetkott C."/>
            <person name="Skyberg J.A."/>
            <person name="Lynne A.M."/>
            <person name="Johnson J.R."/>
            <person name="Nolan L.K."/>
        </authorList>
    </citation>
    <scope>NUCLEOTIDE SEQUENCE [LARGE SCALE GENOMIC DNA]</scope>
</reference>
<accession>A1A7M5</accession>
<feature type="chain" id="PRO_0000302573" description="Acyl-[acyl-carrier-protein]--UDP-N-acetylglucosamine O-acyltransferase">
    <location>
        <begin position="1"/>
        <end position="262"/>
    </location>
</feature>
<gene>
    <name evidence="1" type="primary">lpxA</name>
    <name type="ordered locus">Ecok1_01710</name>
    <name type="ORF">APECO1_1806</name>
</gene>
<dbReference type="EC" id="2.3.1.129" evidence="1"/>
<dbReference type="EMBL" id="CP000468">
    <property type="protein sequence ID" value="ABI99664.1"/>
    <property type="molecule type" value="Genomic_DNA"/>
</dbReference>
<dbReference type="RefSeq" id="WP_000565966.1">
    <property type="nucleotide sequence ID" value="NZ_CADILS010000027.1"/>
</dbReference>
<dbReference type="SMR" id="A1A7M5"/>
<dbReference type="GeneID" id="93777244"/>
<dbReference type="KEGG" id="ecv:APECO1_1806"/>
<dbReference type="HOGENOM" id="CLU_061249_0_0_6"/>
<dbReference type="UniPathway" id="UPA00359">
    <property type="reaction ID" value="UER00477"/>
</dbReference>
<dbReference type="Proteomes" id="UP000008216">
    <property type="component" value="Chromosome"/>
</dbReference>
<dbReference type="GO" id="GO:0005737">
    <property type="term" value="C:cytoplasm"/>
    <property type="evidence" value="ECO:0007669"/>
    <property type="project" value="UniProtKB-SubCell"/>
</dbReference>
<dbReference type="GO" id="GO:0016020">
    <property type="term" value="C:membrane"/>
    <property type="evidence" value="ECO:0007669"/>
    <property type="project" value="GOC"/>
</dbReference>
<dbReference type="GO" id="GO:0008780">
    <property type="term" value="F:acyl-[acyl-carrier-protein]-UDP-N-acetylglucosamine O-acyltransferase activity"/>
    <property type="evidence" value="ECO:0007669"/>
    <property type="project" value="UniProtKB-UniRule"/>
</dbReference>
<dbReference type="GO" id="GO:0009245">
    <property type="term" value="P:lipid A biosynthetic process"/>
    <property type="evidence" value="ECO:0007669"/>
    <property type="project" value="UniProtKB-UniRule"/>
</dbReference>
<dbReference type="CDD" id="cd03351">
    <property type="entry name" value="LbH_UDP-GlcNAc_AT"/>
    <property type="match status" value="1"/>
</dbReference>
<dbReference type="FunFam" id="1.20.1180.10:FF:000001">
    <property type="entry name" value="Acyl-[acyl-carrier-protein]--UDP-N-acetylglucosamine O-acyltransferase"/>
    <property type="match status" value="1"/>
</dbReference>
<dbReference type="FunFam" id="2.160.10.10:FF:000003">
    <property type="entry name" value="Acyl-[acyl-carrier-protein]--UDP-N-acetylglucosamine O-acyltransferase"/>
    <property type="match status" value="1"/>
</dbReference>
<dbReference type="Gene3D" id="2.160.10.10">
    <property type="entry name" value="Hexapeptide repeat proteins"/>
    <property type="match status" value="1"/>
</dbReference>
<dbReference type="Gene3D" id="1.20.1180.10">
    <property type="entry name" value="Udp N-acetylglucosamine O-acyltransferase, C-terminal domain"/>
    <property type="match status" value="1"/>
</dbReference>
<dbReference type="HAMAP" id="MF_00387">
    <property type="entry name" value="LpxA"/>
    <property type="match status" value="1"/>
</dbReference>
<dbReference type="InterPro" id="IPR029098">
    <property type="entry name" value="Acetyltransf_C"/>
</dbReference>
<dbReference type="InterPro" id="IPR037157">
    <property type="entry name" value="Acetyltransf_C_sf"/>
</dbReference>
<dbReference type="InterPro" id="IPR001451">
    <property type="entry name" value="Hexapep"/>
</dbReference>
<dbReference type="InterPro" id="IPR018357">
    <property type="entry name" value="Hexapep_transf_CS"/>
</dbReference>
<dbReference type="InterPro" id="IPR010137">
    <property type="entry name" value="Lipid_A_LpxA"/>
</dbReference>
<dbReference type="InterPro" id="IPR011004">
    <property type="entry name" value="Trimer_LpxA-like_sf"/>
</dbReference>
<dbReference type="NCBIfam" id="TIGR01852">
    <property type="entry name" value="lipid_A_lpxA"/>
    <property type="match status" value="1"/>
</dbReference>
<dbReference type="NCBIfam" id="NF003657">
    <property type="entry name" value="PRK05289.1"/>
    <property type="match status" value="1"/>
</dbReference>
<dbReference type="PANTHER" id="PTHR43480">
    <property type="entry name" value="ACYL-[ACYL-CARRIER-PROTEIN]--UDP-N-ACETYLGLUCOSAMINE O-ACYLTRANSFERASE"/>
    <property type="match status" value="1"/>
</dbReference>
<dbReference type="PANTHER" id="PTHR43480:SF1">
    <property type="entry name" value="ACYL-[ACYL-CARRIER-PROTEIN]--UDP-N-ACETYLGLUCOSAMINE O-ACYLTRANSFERASE, MITOCHONDRIAL-RELATED"/>
    <property type="match status" value="1"/>
</dbReference>
<dbReference type="Pfam" id="PF13720">
    <property type="entry name" value="Acetyltransf_11"/>
    <property type="match status" value="1"/>
</dbReference>
<dbReference type="Pfam" id="PF00132">
    <property type="entry name" value="Hexapep"/>
    <property type="match status" value="2"/>
</dbReference>
<dbReference type="PIRSF" id="PIRSF000456">
    <property type="entry name" value="UDP-GlcNAc_acltr"/>
    <property type="match status" value="1"/>
</dbReference>
<dbReference type="SUPFAM" id="SSF51161">
    <property type="entry name" value="Trimeric LpxA-like enzymes"/>
    <property type="match status" value="1"/>
</dbReference>
<dbReference type="PROSITE" id="PS00101">
    <property type="entry name" value="HEXAPEP_TRANSFERASES"/>
    <property type="match status" value="2"/>
</dbReference>
<sequence>MIDKSAFVHPTAIVEEGASIGANAHIGPFCIVGPHVEIGEGTVLKSHVVVNGHTKIGRDNEIYQFASIGEVNQDLKYAGEPTRVEIGDRNRIRESVTIHRGTVQGGGLTKVGSDNLLMINAHIAHDCTVGNRCILANNATLAGHVSVDDFAIIGGMTAVHQFCIIGAHVMVGGCSGVAQDVPPYVIAQGNHATPFGVNIEGLKRRGFSREAITAIRNAYKLIYRSGKTLDEVKPEIAELAETYPEVKAFTDFFARSTRGLIR</sequence>
<keyword id="KW-0012">Acyltransferase</keyword>
<keyword id="KW-0963">Cytoplasm</keyword>
<keyword id="KW-0441">Lipid A biosynthesis</keyword>
<keyword id="KW-0444">Lipid biosynthesis</keyword>
<keyword id="KW-0443">Lipid metabolism</keyword>
<keyword id="KW-1185">Reference proteome</keyword>
<keyword id="KW-0677">Repeat</keyword>
<keyword id="KW-0808">Transferase</keyword>
<protein>
    <recommendedName>
        <fullName evidence="1">Acyl-[acyl-carrier-protein]--UDP-N-acetylglucosamine O-acyltransferase</fullName>
        <shortName evidence="1">UDP-N-acetylglucosamine acyltransferase</shortName>
        <ecNumber evidence="1">2.3.1.129</ecNumber>
    </recommendedName>
</protein>
<name>LPXA_ECOK1</name>
<comment type="function">
    <text evidence="1">Involved in the biosynthesis of lipid A, a phosphorylated glycolipid that anchors the lipopolysaccharide to the outer membrane of the cell.</text>
</comment>
<comment type="catalytic activity">
    <reaction evidence="1">
        <text>a (3R)-hydroxyacyl-[ACP] + UDP-N-acetyl-alpha-D-glucosamine = a UDP-3-O-[(3R)-3-hydroxyacyl]-N-acetyl-alpha-D-glucosamine + holo-[ACP]</text>
        <dbReference type="Rhea" id="RHEA:67812"/>
        <dbReference type="Rhea" id="RHEA-COMP:9685"/>
        <dbReference type="Rhea" id="RHEA-COMP:9945"/>
        <dbReference type="ChEBI" id="CHEBI:57705"/>
        <dbReference type="ChEBI" id="CHEBI:64479"/>
        <dbReference type="ChEBI" id="CHEBI:78827"/>
        <dbReference type="ChEBI" id="CHEBI:173225"/>
        <dbReference type="EC" id="2.3.1.129"/>
    </reaction>
</comment>
<comment type="pathway">
    <text evidence="1">Glycolipid biosynthesis; lipid IV(A) biosynthesis; lipid IV(A) from (3R)-3-hydroxytetradecanoyl-[acyl-carrier-protein] and UDP-N-acetyl-alpha-D-glucosamine: step 1/6.</text>
</comment>
<comment type="subunit">
    <text evidence="1">Homotrimer.</text>
</comment>
<comment type="subcellular location">
    <subcellularLocation>
        <location evidence="1">Cytoplasm</location>
    </subcellularLocation>
</comment>
<comment type="similarity">
    <text evidence="1">Belongs to the transferase hexapeptide repeat family. LpxA subfamily.</text>
</comment>
<organism>
    <name type="scientific">Escherichia coli O1:K1 / APEC</name>
    <dbReference type="NCBI Taxonomy" id="405955"/>
    <lineage>
        <taxon>Bacteria</taxon>
        <taxon>Pseudomonadati</taxon>
        <taxon>Pseudomonadota</taxon>
        <taxon>Gammaproteobacteria</taxon>
        <taxon>Enterobacterales</taxon>
        <taxon>Enterobacteriaceae</taxon>
        <taxon>Escherichia</taxon>
    </lineage>
</organism>
<evidence type="ECO:0000255" key="1">
    <source>
        <dbReference type="HAMAP-Rule" id="MF_00387"/>
    </source>
</evidence>